<proteinExistence type="inferred from homology"/>
<sequence>MGKTKTRGRRHQDKQRKDEFEPSSNSAKEHIQQEESTYNDEAEIKETQPQMFFGVLDREELEYFKQAESTLQLDAFEAPEEKFQFVTSIIEEAKGKELKLVTSQITSKLMERVILECDETQLKDIFQSFNGVFFGLSCHKYASHVLETLFVRSAALVERELLTPSFDNNEKEGPYVTMENMFLFMLNELKPHLKTMMNHQYASHVLRLLILILSSKTLPNSTKANSTLRSKKSKIARKMIDIKDNDDFNKVYQTPESFKSELRDIITTLYKGFTNGAESRSDISQSTITKFREYSVDKVASPVIQLIIQVEGIFDRDRSFWRLVFNTADEKDPKEESFLEYLLSDPVGSHFLENVIGSARLKYVERLYRLYMKDRIVKLAKRDTTGAFVVRALLEHLKEKDVKQILDAVVPELSMLLNSNMDFGTAIINASNKQGGYLRDDVIAQLIQKYYPEKSDAKNILESCLLLSASTLGNTRDDWPTAEERRRSVFLEQLIDYDDKFLNITIDSMLALPEERLIQMCYHGVFSHVVEHVLQTTRVDIIKRKMLLNILSKESVNLACNVYGSHIMDKLWEFTAKLTLYKERIARALVLETEKVKNSIYGRQVWKNWKLELYVRKMWDWKKLIKEQEFEIFPNSKPLQPKPEKHSRERNNSKEGSAFKKQKHYR</sequence>
<reference key="1">
    <citation type="journal article" date="2009" name="Proc. Natl. Acad. Sci. U.S.A.">
        <title>Eukaryote-to-eukaryote gene transfer events revealed by the genome sequence of the wine yeast Saccharomyces cerevisiae EC1118.</title>
        <authorList>
            <person name="Novo M."/>
            <person name="Bigey F."/>
            <person name="Beyne E."/>
            <person name="Galeote V."/>
            <person name="Gavory F."/>
            <person name="Mallet S."/>
            <person name="Cambon B."/>
            <person name="Legras J.-L."/>
            <person name="Wincker P."/>
            <person name="Casaregola S."/>
            <person name="Dequin S."/>
        </authorList>
    </citation>
    <scope>NUCLEOTIDE SEQUENCE [LARGE SCALE GENOMIC DNA]</scope>
    <source>
        <strain>Lalvin EC1118 / Prise de mousse</strain>
    </source>
</reference>
<feature type="chain" id="PRO_0000407841" description="Nucleolar protein 9">
    <location>
        <begin position="1"/>
        <end position="666"/>
    </location>
</feature>
<feature type="repeat" description="Pumilio 1">
    <location>
        <begin position="92"/>
        <end position="127"/>
    </location>
</feature>
<feature type="repeat" description="Pumilio 2">
    <location>
        <begin position="128"/>
        <end position="163"/>
    </location>
</feature>
<feature type="repeat" description="Pumilio 3">
    <location>
        <begin position="188"/>
        <end position="223"/>
    </location>
</feature>
<feature type="repeat" description="Pumilio 4">
    <location>
        <begin position="286"/>
        <end position="326"/>
    </location>
</feature>
<feature type="repeat" description="Pumilio 5">
    <location>
        <begin position="334"/>
        <end position="369"/>
    </location>
</feature>
<feature type="repeat" description="Pumilio 6">
    <location>
        <begin position="370"/>
        <end position="407"/>
    </location>
</feature>
<feature type="repeat" description="Pumilio 7">
    <location>
        <begin position="511"/>
        <end position="548"/>
    </location>
</feature>
<feature type="repeat" description="Pumilio 8">
    <location>
        <begin position="549"/>
        <end position="587"/>
    </location>
</feature>
<feature type="region of interest" description="Disordered" evidence="2">
    <location>
        <begin position="1"/>
        <end position="40"/>
    </location>
</feature>
<feature type="region of interest" description="Disordered" evidence="2">
    <location>
        <begin position="635"/>
        <end position="666"/>
    </location>
</feature>
<feature type="compositionally biased region" description="Basic residues" evidence="2">
    <location>
        <begin position="1"/>
        <end position="14"/>
    </location>
</feature>
<feature type="compositionally biased region" description="Basic and acidic residues" evidence="2">
    <location>
        <begin position="642"/>
        <end position="653"/>
    </location>
</feature>
<name>NOP9_YEAS8</name>
<organism>
    <name type="scientific">Saccharomyces cerevisiae (strain Lalvin EC1118 / Prise de mousse)</name>
    <name type="common">Baker's yeast</name>
    <dbReference type="NCBI Taxonomy" id="643680"/>
    <lineage>
        <taxon>Eukaryota</taxon>
        <taxon>Fungi</taxon>
        <taxon>Dikarya</taxon>
        <taxon>Ascomycota</taxon>
        <taxon>Saccharomycotina</taxon>
        <taxon>Saccharomycetes</taxon>
        <taxon>Saccharomycetales</taxon>
        <taxon>Saccharomycetaceae</taxon>
        <taxon>Saccharomyces</taxon>
    </lineage>
</organism>
<protein>
    <recommendedName>
        <fullName>Nucleolar protein 9</fullName>
    </recommendedName>
    <alternativeName>
        <fullName>Pumilio domain-containing protein NOP9</fullName>
    </alternativeName>
</protein>
<gene>
    <name type="primary">NOP9</name>
    <name type="ORF">EC1118_1J11_2476g</name>
</gene>
<dbReference type="EMBL" id="FN393075">
    <property type="protein sequence ID" value="CAY80767.2"/>
    <property type="molecule type" value="Genomic_DNA"/>
</dbReference>
<dbReference type="SMR" id="C8ZBK1"/>
<dbReference type="HOGENOM" id="CLU_008720_1_1_1"/>
<dbReference type="OrthoDB" id="24906at4893"/>
<dbReference type="Proteomes" id="UP000000286">
    <property type="component" value="Chromosome X, Scaffold EC1118_1J11"/>
</dbReference>
<dbReference type="GO" id="GO:0030686">
    <property type="term" value="C:90S preribosome"/>
    <property type="evidence" value="ECO:0007669"/>
    <property type="project" value="TreeGrafter"/>
</dbReference>
<dbReference type="GO" id="GO:0005730">
    <property type="term" value="C:nucleolus"/>
    <property type="evidence" value="ECO:0007669"/>
    <property type="project" value="UniProtKB-SubCell"/>
</dbReference>
<dbReference type="GO" id="GO:0030688">
    <property type="term" value="C:preribosome, small subunit precursor"/>
    <property type="evidence" value="ECO:0007669"/>
    <property type="project" value="TreeGrafter"/>
</dbReference>
<dbReference type="GO" id="GO:0003723">
    <property type="term" value="F:RNA binding"/>
    <property type="evidence" value="ECO:0007669"/>
    <property type="project" value="InterPro"/>
</dbReference>
<dbReference type="GO" id="GO:0000480">
    <property type="term" value="P:endonucleolytic cleavage in 5'-ETS of tricistronic rRNA transcript (SSU-rRNA, 5.8S rRNA, LSU-rRNA)"/>
    <property type="evidence" value="ECO:0007669"/>
    <property type="project" value="TreeGrafter"/>
</dbReference>
<dbReference type="GO" id="GO:0000447">
    <property type="term" value="P:endonucleolytic cleavage in ITS1 to separate SSU-rRNA from 5.8S rRNA and LSU-rRNA from tricistronic rRNA transcript (SSU-rRNA, 5.8S rRNA, LSU-rRNA)"/>
    <property type="evidence" value="ECO:0007669"/>
    <property type="project" value="TreeGrafter"/>
</dbReference>
<dbReference type="GO" id="GO:0000472">
    <property type="term" value="P:endonucleolytic cleavage to generate mature 5'-end of SSU-rRNA from (SSU-rRNA, 5.8S rRNA, LSU-rRNA)"/>
    <property type="evidence" value="ECO:0007669"/>
    <property type="project" value="TreeGrafter"/>
</dbReference>
<dbReference type="GO" id="GO:0000056">
    <property type="term" value="P:ribosomal small subunit export from nucleus"/>
    <property type="evidence" value="ECO:0007669"/>
    <property type="project" value="TreeGrafter"/>
</dbReference>
<dbReference type="FunFam" id="1.25.10.10:FF:000647">
    <property type="entry name" value="Nucleolar protein 9"/>
    <property type="match status" value="1"/>
</dbReference>
<dbReference type="FunFam" id="1.25.10.10:FF:000684">
    <property type="entry name" value="Nucleolar protein 9"/>
    <property type="match status" value="1"/>
</dbReference>
<dbReference type="Gene3D" id="1.25.10.10">
    <property type="entry name" value="Leucine-rich Repeat Variant"/>
    <property type="match status" value="3"/>
</dbReference>
<dbReference type="InterPro" id="IPR011989">
    <property type="entry name" value="ARM-like"/>
</dbReference>
<dbReference type="InterPro" id="IPR016024">
    <property type="entry name" value="ARM-type_fold"/>
</dbReference>
<dbReference type="InterPro" id="IPR040000">
    <property type="entry name" value="NOP9"/>
</dbReference>
<dbReference type="InterPro" id="IPR001313">
    <property type="entry name" value="Pumilio_RNA-bd_rpt"/>
</dbReference>
<dbReference type="PANTHER" id="PTHR13102">
    <property type="entry name" value="NUCLEOLAR PROTEIN 9"/>
    <property type="match status" value="1"/>
</dbReference>
<dbReference type="PANTHER" id="PTHR13102:SF0">
    <property type="entry name" value="NUCLEOLAR PROTEIN 9"/>
    <property type="match status" value="1"/>
</dbReference>
<dbReference type="Pfam" id="PF22493">
    <property type="entry name" value="PUF_NOP9"/>
    <property type="match status" value="1"/>
</dbReference>
<dbReference type="SMART" id="SM00025">
    <property type="entry name" value="Pumilio"/>
    <property type="match status" value="8"/>
</dbReference>
<dbReference type="SUPFAM" id="SSF48371">
    <property type="entry name" value="ARM repeat"/>
    <property type="match status" value="1"/>
</dbReference>
<evidence type="ECO:0000250" key="1"/>
<evidence type="ECO:0000256" key="2">
    <source>
        <dbReference type="SAM" id="MobiDB-lite"/>
    </source>
</evidence>
<evidence type="ECO:0000305" key="3"/>
<accession>C8ZBK1</accession>
<keyword id="KW-0539">Nucleus</keyword>
<keyword id="KW-0677">Repeat</keyword>
<keyword id="KW-0690">Ribosome biogenesis</keyword>
<keyword id="KW-0698">rRNA processing</keyword>
<comment type="function">
    <text evidence="1">RNA-binding nucleolar protein required for pre-rRNA processing. Component of the 90S pre-ribosome involved in production of 18S rRNA and assembly of small ribosomal subunit. Component of the pre-40S ribosome required for release from the nucleolus (By similarity).</text>
</comment>
<comment type="subunit">
    <text evidence="1">Component of the 90S pre-ribosome. Component of the pre-40S ribosome.</text>
</comment>
<comment type="subcellular location">
    <subcellularLocation>
        <location evidence="1">Nucleus</location>
        <location evidence="1">Nucleolus</location>
    </subcellularLocation>
</comment>
<comment type="similarity">
    <text evidence="3">Belongs to the NOP9 family.</text>
</comment>